<dbReference type="EC" id="2.4.2.8" evidence="1"/>
<dbReference type="EMBL" id="AF008931">
    <property type="protein sequence ID" value="AAC46255.1"/>
    <property type="molecule type" value="Genomic_DNA"/>
</dbReference>
<dbReference type="EMBL" id="AE006468">
    <property type="protein sequence ID" value="AAL19134.1"/>
    <property type="molecule type" value="Genomic_DNA"/>
</dbReference>
<dbReference type="RefSeq" id="NP_459175.1">
    <property type="nucleotide sequence ID" value="NC_003197.2"/>
</dbReference>
<dbReference type="RefSeq" id="WP_000683342.1">
    <property type="nucleotide sequence ID" value="NC_003197.2"/>
</dbReference>
<dbReference type="PDB" id="1J7J">
    <property type="method" value="X-ray"/>
    <property type="resolution" value="2.30 A"/>
    <property type="chains" value="A/B=1-178"/>
</dbReference>
<dbReference type="PDBsum" id="1J7J"/>
<dbReference type="SMR" id="O33799"/>
<dbReference type="STRING" id="99287.STM0170"/>
<dbReference type="PaxDb" id="99287-STM0170"/>
<dbReference type="GeneID" id="1251688"/>
<dbReference type="KEGG" id="stm:STM0170"/>
<dbReference type="PATRIC" id="fig|99287.12.peg.180"/>
<dbReference type="HOGENOM" id="CLU_073615_0_0_6"/>
<dbReference type="OMA" id="MQWRVAP"/>
<dbReference type="PhylomeDB" id="O33799"/>
<dbReference type="BioCyc" id="SENT99287:STM0170-MONOMER"/>
<dbReference type="UniPathway" id="UPA00591">
    <property type="reaction ID" value="UER00648"/>
</dbReference>
<dbReference type="EvolutionaryTrace" id="O33799"/>
<dbReference type="Proteomes" id="UP000001014">
    <property type="component" value="Chromosome"/>
</dbReference>
<dbReference type="GO" id="GO:0005829">
    <property type="term" value="C:cytosol"/>
    <property type="evidence" value="ECO:0000318"/>
    <property type="project" value="GO_Central"/>
</dbReference>
<dbReference type="GO" id="GO:0052657">
    <property type="term" value="F:guanine phosphoribosyltransferase activity"/>
    <property type="evidence" value="ECO:0007669"/>
    <property type="project" value="RHEA"/>
</dbReference>
<dbReference type="GO" id="GO:0004422">
    <property type="term" value="F:hypoxanthine phosphoribosyltransferase activity"/>
    <property type="evidence" value="ECO:0000318"/>
    <property type="project" value="GO_Central"/>
</dbReference>
<dbReference type="GO" id="GO:0000287">
    <property type="term" value="F:magnesium ion binding"/>
    <property type="evidence" value="ECO:0000318"/>
    <property type="project" value="GO_Central"/>
</dbReference>
<dbReference type="GO" id="GO:0000166">
    <property type="term" value="F:nucleotide binding"/>
    <property type="evidence" value="ECO:0007669"/>
    <property type="project" value="UniProtKB-KW"/>
</dbReference>
<dbReference type="GO" id="GO:0032263">
    <property type="term" value="P:GMP salvage"/>
    <property type="evidence" value="ECO:0000318"/>
    <property type="project" value="GO_Central"/>
</dbReference>
<dbReference type="GO" id="GO:0006178">
    <property type="term" value="P:guanine salvage"/>
    <property type="evidence" value="ECO:0000318"/>
    <property type="project" value="GO_Central"/>
</dbReference>
<dbReference type="GO" id="GO:0046100">
    <property type="term" value="P:hypoxanthine metabolic process"/>
    <property type="evidence" value="ECO:0000318"/>
    <property type="project" value="GO_Central"/>
</dbReference>
<dbReference type="GO" id="GO:0032264">
    <property type="term" value="P:IMP salvage"/>
    <property type="evidence" value="ECO:0000318"/>
    <property type="project" value="GO_Central"/>
</dbReference>
<dbReference type="GO" id="GO:0006166">
    <property type="term" value="P:purine ribonucleoside salvage"/>
    <property type="evidence" value="ECO:0007669"/>
    <property type="project" value="UniProtKB-KW"/>
</dbReference>
<dbReference type="CDD" id="cd06223">
    <property type="entry name" value="PRTases_typeI"/>
    <property type="match status" value="1"/>
</dbReference>
<dbReference type="FunFam" id="3.40.50.2020:FF:000006">
    <property type="entry name" value="Hypoxanthine phosphoribosyltransferase"/>
    <property type="match status" value="1"/>
</dbReference>
<dbReference type="Gene3D" id="3.40.50.2020">
    <property type="match status" value="1"/>
</dbReference>
<dbReference type="InterPro" id="IPR050408">
    <property type="entry name" value="HGPRT"/>
</dbReference>
<dbReference type="InterPro" id="IPR005904">
    <property type="entry name" value="Hxn_phspho_trans"/>
</dbReference>
<dbReference type="InterPro" id="IPR000836">
    <property type="entry name" value="PRibTrfase_dom"/>
</dbReference>
<dbReference type="InterPro" id="IPR029057">
    <property type="entry name" value="PRTase-like"/>
</dbReference>
<dbReference type="NCBIfam" id="TIGR01203">
    <property type="entry name" value="HGPRTase"/>
    <property type="match status" value="1"/>
</dbReference>
<dbReference type="PANTHER" id="PTHR43340:SF1">
    <property type="entry name" value="HYPOXANTHINE PHOSPHORIBOSYLTRANSFERASE"/>
    <property type="match status" value="1"/>
</dbReference>
<dbReference type="PANTHER" id="PTHR43340">
    <property type="entry name" value="HYPOXANTHINE-GUANINE PHOSPHORIBOSYLTRANSFERASE"/>
    <property type="match status" value="1"/>
</dbReference>
<dbReference type="Pfam" id="PF00156">
    <property type="entry name" value="Pribosyltran"/>
    <property type="match status" value="1"/>
</dbReference>
<dbReference type="SUPFAM" id="SSF53271">
    <property type="entry name" value="PRTase-like"/>
    <property type="match status" value="1"/>
</dbReference>
<dbReference type="PROSITE" id="PS00103">
    <property type="entry name" value="PUR_PYR_PR_TRANSFER"/>
    <property type="match status" value="1"/>
</dbReference>
<sequence length="178" mass="20068">MKHTVEVMIPEAEIKARIAELGRQITERYKDSGSEMVLVGLLRGSFMFMADLCREVQVPHEVDFMTASSYGSGMSTTRDVKILKDLDEDIRGKDVLIVEDIIDSGNTLSKVREILGLREPKSLAICTLLDKPSRREVDVPVEFVGFSIPDEFVVGYGIDYAQRYRHLPYVGKVVLLDE</sequence>
<comment type="function">
    <text evidence="1">Purine salvage pathway enzyme which catalyzes the transfer of the ribosyl-5-phosphate group from 5-phospho-alpha-D-ribose 1-diphosphate (PRPP) to the N9 position of hypoxanthine to yield IMP (inosine 5'-monophosphate). To a lesser extent, can also act on guanine leading to GMP, but shows a highly less efficient activity with xanthine.</text>
</comment>
<comment type="catalytic activity">
    <reaction evidence="1">
        <text>IMP + diphosphate = hypoxanthine + 5-phospho-alpha-D-ribose 1-diphosphate</text>
        <dbReference type="Rhea" id="RHEA:17973"/>
        <dbReference type="ChEBI" id="CHEBI:17368"/>
        <dbReference type="ChEBI" id="CHEBI:33019"/>
        <dbReference type="ChEBI" id="CHEBI:58017"/>
        <dbReference type="ChEBI" id="CHEBI:58053"/>
        <dbReference type="EC" id="2.4.2.8"/>
    </reaction>
    <physiologicalReaction direction="right-to-left" evidence="1">
        <dbReference type="Rhea" id="RHEA:17975"/>
    </physiologicalReaction>
</comment>
<comment type="catalytic activity">
    <reaction evidence="1">
        <text>GMP + diphosphate = guanine + 5-phospho-alpha-D-ribose 1-diphosphate</text>
        <dbReference type="Rhea" id="RHEA:25424"/>
        <dbReference type="ChEBI" id="CHEBI:16235"/>
        <dbReference type="ChEBI" id="CHEBI:33019"/>
        <dbReference type="ChEBI" id="CHEBI:58017"/>
        <dbReference type="ChEBI" id="CHEBI:58115"/>
        <dbReference type="EC" id="2.4.2.8"/>
    </reaction>
    <physiologicalReaction direction="right-to-left" evidence="1">
        <dbReference type="Rhea" id="RHEA:25426"/>
    </physiologicalReaction>
</comment>
<comment type="cofactor">
    <cofactor evidence="5">
        <name>Mg(2+)</name>
        <dbReference type="ChEBI" id="CHEBI:18420"/>
    </cofactor>
</comment>
<comment type="pathway">
    <text evidence="1">Purine metabolism; IMP biosynthesis via salvage pathway; IMP from hypoxanthine: step 1/1.</text>
</comment>
<comment type="subunit">
    <text evidence="1">Homotetramer.</text>
</comment>
<comment type="subcellular location">
    <subcellularLocation>
        <location>Cytoplasm</location>
    </subcellularLocation>
</comment>
<comment type="similarity">
    <text evidence="4">Belongs to the purine/pyrimidine phosphoribosyltransferase family.</text>
</comment>
<gene>
    <name type="primary">hpt</name>
    <name type="ordered locus">STM0170</name>
</gene>
<proteinExistence type="evidence at protein level"/>
<protein>
    <recommendedName>
        <fullName>Hypoxanthine phosphoribosyltransferase</fullName>
        <shortName>HPRT</shortName>
        <ecNumber evidence="1">2.4.2.8</ecNumber>
    </recommendedName>
</protein>
<feature type="chain" id="PRO_0000139635" description="Hypoxanthine phosphoribosyltransferase">
    <location>
        <begin position="1"/>
        <end position="178"/>
    </location>
</feature>
<feature type="active site" description="Proton acceptor" evidence="1">
    <location>
        <position position="103"/>
    </location>
</feature>
<feature type="binding site" evidence="2">
    <location>
        <position position="43"/>
    </location>
    <ligand>
        <name>diphosphate</name>
        <dbReference type="ChEBI" id="CHEBI:33019"/>
    </ligand>
</feature>
<feature type="binding site" evidence="2">
    <location>
        <position position="44"/>
    </location>
    <ligand>
        <name>diphosphate</name>
        <dbReference type="ChEBI" id="CHEBI:33019"/>
    </ligand>
</feature>
<feature type="binding site" evidence="1">
    <location>
        <position position="99"/>
    </location>
    <ligand>
        <name>GMP</name>
        <dbReference type="ChEBI" id="CHEBI:58115"/>
    </ligand>
</feature>
<feature type="binding site" evidence="1">
    <location>
        <position position="99"/>
    </location>
    <ligand>
        <name>IMP</name>
        <dbReference type="ChEBI" id="CHEBI:58053"/>
    </ligand>
</feature>
<feature type="binding site" evidence="3 6">
    <location>
        <position position="99"/>
    </location>
    <ligand>
        <name>Mg(2+)</name>
        <dbReference type="ChEBI" id="CHEBI:18420"/>
    </ligand>
</feature>
<feature type="binding site" evidence="3 6">
    <location>
        <position position="100"/>
    </location>
    <ligand>
        <name>Mg(2+)</name>
        <dbReference type="ChEBI" id="CHEBI:18420"/>
    </ligand>
</feature>
<feature type="binding site" evidence="1">
    <location>
        <begin position="103"/>
        <end position="108"/>
    </location>
    <ligand>
        <name>GMP</name>
        <dbReference type="ChEBI" id="CHEBI:58115"/>
    </ligand>
</feature>
<feature type="binding site" evidence="1">
    <location>
        <begin position="103"/>
        <end position="108"/>
    </location>
    <ligand>
        <name>IMP</name>
        <dbReference type="ChEBI" id="CHEBI:58053"/>
    </ligand>
</feature>
<feature type="binding site" evidence="1">
    <location>
        <position position="131"/>
    </location>
    <ligand>
        <name>GMP</name>
        <dbReference type="ChEBI" id="CHEBI:58115"/>
    </ligand>
</feature>
<feature type="binding site" evidence="1">
    <location>
        <position position="131"/>
    </location>
    <ligand>
        <name>IMP</name>
        <dbReference type="ChEBI" id="CHEBI:58053"/>
    </ligand>
</feature>
<feature type="binding site" evidence="1">
    <location>
        <position position="159"/>
    </location>
    <ligand>
        <name>GMP</name>
        <dbReference type="ChEBI" id="CHEBI:58115"/>
    </ligand>
</feature>
<feature type="binding site" evidence="2">
    <location>
        <position position="165"/>
    </location>
    <ligand>
        <name>diphosphate</name>
        <dbReference type="ChEBI" id="CHEBI:33019"/>
    </ligand>
</feature>
<feature type="strand" evidence="7">
    <location>
        <begin position="4"/>
        <end position="9"/>
    </location>
</feature>
<feature type="helix" evidence="7">
    <location>
        <begin position="11"/>
        <end position="30"/>
    </location>
</feature>
<feature type="strand" evidence="7">
    <location>
        <begin position="36"/>
        <end position="41"/>
    </location>
</feature>
<feature type="turn" evidence="7">
    <location>
        <begin position="42"/>
        <end position="45"/>
    </location>
</feature>
<feature type="helix" evidence="7">
    <location>
        <begin position="46"/>
        <end position="53"/>
    </location>
</feature>
<feature type="strand" evidence="7">
    <location>
        <begin position="61"/>
        <end position="66"/>
    </location>
</feature>
<feature type="strand" evidence="7">
    <location>
        <begin position="93"/>
        <end position="104"/>
    </location>
</feature>
<feature type="helix" evidence="7">
    <location>
        <begin position="106"/>
        <end position="116"/>
    </location>
</feature>
<feature type="strand" evidence="7">
    <location>
        <begin position="121"/>
        <end position="130"/>
    </location>
</feature>
<feature type="helix" evidence="7">
    <location>
        <begin position="132"/>
        <end position="134"/>
    </location>
</feature>
<feature type="strand" evidence="7">
    <location>
        <begin position="142"/>
        <end position="147"/>
    </location>
</feature>
<feature type="strand" evidence="7">
    <location>
        <begin position="153"/>
        <end position="155"/>
    </location>
</feature>
<feature type="strand" evidence="7">
    <location>
        <begin position="160"/>
        <end position="162"/>
    </location>
</feature>
<feature type="strand" evidence="7">
    <location>
        <begin position="168"/>
        <end position="174"/>
    </location>
</feature>
<reference key="1">
    <citation type="journal article" date="1998" name="Biochemistry">
        <title>A single amino acid substitution in the human and a bacterial hypoxanthine phosphoribosyltransferase modulates specificity for the binding of guanine.</title>
        <authorList>
            <person name="Lee C.C."/>
            <person name="Craig S.P. III"/>
            <person name="Eakin A.E."/>
        </authorList>
    </citation>
    <scope>NUCLEOTIDE SEQUENCE [GENOMIC DNA]</scope>
    <source>
        <strain>LT2 / GP660</strain>
    </source>
</reference>
<reference key="2">
    <citation type="journal article" date="2001" name="Nature">
        <title>Complete genome sequence of Salmonella enterica serovar Typhimurium LT2.</title>
        <authorList>
            <person name="McClelland M."/>
            <person name="Sanderson K.E."/>
            <person name="Spieth J."/>
            <person name="Clifton S.W."/>
            <person name="Latreille P."/>
            <person name="Courtney L."/>
            <person name="Porwollik S."/>
            <person name="Ali J."/>
            <person name="Dante M."/>
            <person name="Du F."/>
            <person name="Hou S."/>
            <person name="Layman D."/>
            <person name="Leonard S."/>
            <person name="Nguyen C."/>
            <person name="Scott K."/>
            <person name="Holmes A."/>
            <person name="Grewal N."/>
            <person name="Mulvaney E."/>
            <person name="Ryan E."/>
            <person name="Sun H."/>
            <person name="Florea L."/>
            <person name="Miller W."/>
            <person name="Stoneking T."/>
            <person name="Nhan M."/>
            <person name="Waterston R."/>
            <person name="Wilson R.K."/>
        </authorList>
    </citation>
    <scope>NUCLEOTIDE SEQUENCE [LARGE SCALE GENOMIC DNA]</scope>
    <source>
        <strain>LT2 / SGSC1412 / ATCC 700720</strain>
    </source>
</reference>
<reference key="3">
    <citation type="submission" date="2009-02" db="PDB data bank">
        <title>Crystal structure of the HPRT from Salmonella typhimurium at 2.3 A resolution.</title>
        <authorList>
            <person name="Lee C.C."/>
            <person name="Focia P.J."/>
            <person name="Spraggon G."/>
            <person name="Eakin A.E."/>
        </authorList>
    </citation>
    <scope>X-RAY CRYSTALLOGRAPHY (2.3 ANGSTROMS) IN COMPLEX WITH MAGNESIUM</scope>
    <scope>COFACTOR</scope>
</reference>
<accession>O33799</accession>
<keyword id="KW-0002">3D-structure</keyword>
<keyword id="KW-0963">Cytoplasm</keyword>
<keyword id="KW-0328">Glycosyltransferase</keyword>
<keyword id="KW-0460">Magnesium</keyword>
<keyword id="KW-0479">Metal-binding</keyword>
<keyword id="KW-0547">Nucleotide-binding</keyword>
<keyword id="KW-0660">Purine salvage</keyword>
<keyword id="KW-1185">Reference proteome</keyword>
<keyword id="KW-0808">Transferase</keyword>
<name>HPRT_SALTY</name>
<evidence type="ECO:0000250" key="1">
    <source>
        <dbReference type="UniProtKB" id="P0A9M2"/>
    </source>
</evidence>
<evidence type="ECO:0000250" key="2">
    <source>
        <dbReference type="UniProtKB" id="P9WHQ9"/>
    </source>
</evidence>
<evidence type="ECO:0000269" key="3">
    <source ref="3"/>
</evidence>
<evidence type="ECO:0000305" key="4"/>
<evidence type="ECO:0000305" key="5">
    <source ref="3"/>
</evidence>
<evidence type="ECO:0007744" key="6">
    <source>
        <dbReference type="PDB" id="1J7J"/>
    </source>
</evidence>
<evidence type="ECO:0007829" key="7">
    <source>
        <dbReference type="PDB" id="1J7J"/>
    </source>
</evidence>
<organism>
    <name type="scientific">Salmonella typhimurium (strain LT2 / SGSC1412 / ATCC 700720)</name>
    <dbReference type="NCBI Taxonomy" id="99287"/>
    <lineage>
        <taxon>Bacteria</taxon>
        <taxon>Pseudomonadati</taxon>
        <taxon>Pseudomonadota</taxon>
        <taxon>Gammaproteobacteria</taxon>
        <taxon>Enterobacterales</taxon>
        <taxon>Enterobacteriaceae</taxon>
        <taxon>Salmonella</taxon>
    </lineage>
</organism>